<feature type="chain" id="PRO_0000389104" description="NADH dehydrogenase [ubiquinone] 1 beta subcomplex subunit 1">
    <location>
        <begin position="1"/>
        <end position="58"/>
    </location>
</feature>
<feature type="transmembrane region" description="Helical" evidence="2">
    <location>
        <begin position="11"/>
        <end position="27"/>
    </location>
</feature>
<organism>
    <name type="scientific">Pongo pygmaeus</name>
    <name type="common">Bornean orangutan</name>
    <dbReference type="NCBI Taxonomy" id="9600"/>
    <lineage>
        <taxon>Eukaryota</taxon>
        <taxon>Metazoa</taxon>
        <taxon>Chordata</taxon>
        <taxon>Craniata</taxon>
        <taxon>Vertebrata</taxon>
        <taxon>Euteleostomi</taxon>
        <taxon>Mammalia</taxon>
        <taxon>Eutheria</taxon>
        <taxon>Euarchontoglires</taxon>
        <taxon>Primates</taxon>
        <taxon>Haplorrhini</taxon>
        <taxon>Catarrhini</taxon>
        <taxon>Hominidae</taxon>
        <taxon>Pongo</taxon>
    </lineage>
</organism>
<proteinExistence type="inferred from homology"/>
<accession>P0CB74</accession>
<accession>Q0MQC4</accession>
<accession>Q5R683</accession>
<protein>
    <recommendedName>
        <fullName>NADH dehydrogenase [ubiquinone] 1 beta subcomplex subunit 1</fullName>
    </recommendedName>
    <alternativeName>
        <fullName>Complex I-MNLL</fullName>
        <shortName>CI-MNLL</shortName>
    </alternativeName>
    <alternativeName>
        <fullName>NADH-ubiquinone oxidoreductase MNLL subunit</fullName>
    </alternativeName>
</protein>
<keyword id="KW-0249">Electron transport</keyword>
<keyword id="KW-0472">Membrane</keyword>
<keyword id="KW-0496">Mitochondrion</keyword>
<keyword id="KW-0999">Mitochondrion inner membrane</keyword>
<keyword id="KW-0679">Respiratory chain</keyword>
<keyword id="KW-0812">Transmembrane</keyword>
<keyword id="KW-1133">Transmembrane helix</keyword>
<keyword id="KW-0813">Transport</keyword>
<dbReference type="EMBL" id="DQ885710">
    <property type="protein sequence ID" value="ABH12219.1"/>
    <property type="molecule type" value="mRNA"/>
</dbReference>
<dbReference type="SMR" id="P0CB74"/>
<dbReference type="GO" id="GO:0005743">
    <property type="term" value="C:mitochondrial inner membrane"/>
    <property type="evidence" value="ECO:0007669"/>
    <property type="project" value="UniProtKB-SubCell"/>
</dbReference>
<dbReference type="GO" id="GO:0045271">
    <property type="term" value="C:respiratory chain complex I"/>
    <property type="evidence" value="ECO:0000250"/>
    <property type="project" value="UniProtKB"/>
</dbReference>
<dbReference type="InterPro" id="IPR012575">
    <property type="entry name" value="NDUB1"/>
</dbReference>
<dbReference type="PANTHER" id="PTHR15222">
    <property type="entry name" value="NADH DEHYDROGENASE [UBIQUINONE] 1 BETA SUBCOMPLEX SUBUNIT 1"/>
    <property type="match status" value="1"/>
</dbReference>
<dbReference type="PANTHER" id="PTHR15222:SF2">
    <property type="entry name" value="NADH DEHYDROGENASE [UBIQUINONE] 1 BETA SUBCOMPLEX SUBUNIT 1"/>
    <property type="match status" value="1"/>
</dbReference>
<dbReference type="Pfam" id="PF08040">
    <property type="entry name" value="NADH_oxidored"/>
    <property type="match status" value="1"/>
</dbReference>
<reference key="1">
    <citation type="journal article" date="2006" name="Gene">
        <title>Adaptive selection of mitochondrial complex I subunits during primate radiation.</title>
        <authorList>
            <person name="Mishmar D."/>
            <person name="Ruiz-Pesini E."/>
            <person name="Mondragon-Palomino M."/>
            <person name="Procaccio V."/>
            <person name="Gaut B."/>
            <person name="Wallace D.C."/>
        </authorList>
    </citation>
    <scope>NUCLEOTIDE SEQUENCE [MRNA]</scope>
</reference>
<sequence length="58" mass="6932">MVNLLQIVRDHWVHVLVPMGFVIGCYLDKKSDEQLTAFRNKSMLFKRELQPNEEVTWK</sequence>
<evidence type="ECO:0000250" key="1">
    <source>
        <dbReference type="UniProtKB" id="O75438"/>
    </source>
</evidence>
<evidence type="ECO:0000255" key="2"/>
<evidence type="ECO:0000305" key="3"/>
<comment type="function">
    <text evidence="1">Accessory subunit of the mitochondrial membrane respiratory chain NADH dehydrogenase (Complex I) that is believed not to be involved in catalysis. Complex I functions in the transfer of electrons from NADH to the respiratory chain. The immediate electron acceptor for the enzyme is believed to be ubiquinone.</text>
</comment>
<comment type="subunit">
    <text evidence="1">Complex I is composed of 45 different subunits.</text>
</comment>
<comment type="subcellular location">
    <subcellularLocation>
        <location evidence="1">Mitochondrion inner membrane</location>
        <topology evidence="2">Single-pass membrane protein</topology>
        <orientation evidence="1">Matrix side</orientation>
    </subcellularLocation>
</comment>
<comment type="similarity">
    <text evidence="3">Belongs to the complex I NDUFB1 subunit family.</text>
</comment>
<name>NDUB1_PONPY</name>
<gene>
    <name type="primary">NDUFB1</name>
</gene>